<name>RL30_ERYLH</name>
<keyword id="KW-1185">Reference proteome</keyword>
<keyword id="KW-0687">Ribonucleoprotein</keyword>
<keyword id="KW-0689">Ribosomal protein</keyword>
<dbReference type="EMBL" id="CP000157">
    <property type="protein sequence ID" value="ABC63712.1"/>
    <property type="molecule type" value="Genomic_DNA"/>
</dbReference>
<dbReference type="RefSeq" id="WP_011414544.1">
    <property type="nucleotide sequence ID" value="NC_007722.1"/>
</dbReference>
<dbReference type="SMR" id="Q2N9C9"/>
<dbReference type="STRING" id="314225.ELI_08100"/>
<dbReference type="KEGG" id="eli:ELI_08100"/>
<dbReference type="eggNOG" id="COG1841">
    <property type="taxonomic scope" value="Bacteria"/>
</dbReference>
<dbReference type="HOGENOM" id="CLU_131047_1_2_5"/>
<dbReference type="OrthoDB" id="9812790at2"/>
<dbReference type="Proteomes" id="UP000008808">
    <property type="component" value="Chromosome"/>
</dbReference>
<dbReference type="GO" id="GO:0022625">
    <property type="term" value="C:cytosolic large ribosomal subunit"/>
    <property type="evidence" value="ECO:0007669"/>
    <property type="project" value="TreeGrafter"/>
</dbReference>
<dbReference type="GO" id="GO:0003735">
    <property type="term" value="F:structural constituent of ribosome"/>
    <property type="evidence" value="ECO:0007669"/>
    <property type="project" value="InterPro"/>
</dbReference>
<dbReference type="GO" id="GO:0006412">
    <property type="term" value="P:translation"/>
    <property type="evidence" value="ECO:0007669"/>
    <property type="project" value="UniProtKB-UniRule"/>
</dbReference>
<dbReference type="CDD" id="cd01658">
    <property type="entry name" value="Ribosomal_L30"/>
    <property type="match status" value="1"/>
</dbReference>
<dbReference type="Gene3D" id="3.30.1390.20">
    <property type="entry name" value="Ribosomal protein L30, ferredoxin-like fold domain"/>
    <property type="match status" value="1"/>
</dbReference>
<dbReference type="HAMAP" id="MF_01371_B">
    <property type="entry name" value="Ribosomal_uL30_B"/>
    <property type="match status" value="1"/>
</dbReference>
<dbReference type="InterPro" id="IPR036919">
    <property type="entry name" value="Ribo_uL30_ferredoxin-like_sf"/>
</dbReference>
<dbReference type="InterPro" id="IPR005996">
    <property type="entry name" value="Ribosomal_uL30_bac-type"/>
</dbReference>
<dbReference type="InterPro" id="IPR016082">
    <property type="entry name" value="Ribosomal_uL30_ferredoxin-like"/>
</dbReference>
<dbReference type="NCBIfam" id="TIGR01308">
    <property type="entry name" value="rpmD_bact"/>
    <property type="match status" value="1"/>
</dbReference>
<dbReference type="PANTHER" id="PTHR15892:SF2">
    <property type="entry name" value="LARGE RIBOSOMAL SUBUNIT PROTEIN UL30M"/>
    <property type="match status" value="1"/>
</dbReference>
<dbReference type="PANTHER" id="PTHR15892">
    <property type="entry name" value="MITOCHONDRIAL RIBOSOMAL PROTEIN L30"/>
    <property type="match status" value="1"/>
</dbReference>
<dbReference type="Pfam" id="PF00327">
    <property type="entry name" value="Ribosomal_L30"/>
    <property type="match status" value="1"/>
</dbReference>
<dbReference type="PIRSF" id="PIRSF002211">
    <property type="entry name" value="Ribosomal_L30_bac-type"/>
    <property type="match status" value="1"/>
</dbReference>
<dbReference type="SUPFAM" id="SSF55129">
    <property type="entry name" value="Ribosomal protein L30p/L7e"/>
    <property type="match status" value="1"/>
</dbReference>
<sequence length="58" mass="6440">MAKIKIKQTGSPIRRPESQKKILVGLGLNKMHKVVELEDTPEVRGAIAKIPHLVEVVD</sequence>
<reference key="1">
    <citation type="journal article" date="2009" name="J. Bacteriol.">
        <title>Complete genome sequence of Erythrobacter litoralis HTCC2594.</title>
        <authorList>
            <person name="Oh H.M."/>
            <person name="Giovannoni S.J."/>
            <person name="Ferriera S."/>
            <person name="Johnson J."/>
            <person name="Cho J.C."/>
        </authorList>
    </citation>
    <scope>NUCLEOTIDE SEQUENCE [LARGE SCALE GENOMIC DNA]</scope>
    <source>
        <strain>HTCC2594</strain>
    </source>
</reference>
<gene>
    <name evidence="1" type="primary">rpmD</name>
    <name type="ordered locus">ELI_08100</name>
</gene>
<protein>
    <recommendedName>
        <fullName evidence="1">Large ribosomal subunit protein uL30</fullName>
    </recommendedName>
    <alternativeName>
        <fullName evidence="2">50S ribosomal protein L30</fullName>
    </alternativeName>
</protein>
<organism>
    <name type="scientific">Erythrobacter litoralis (strain HTCC2594)</name>
    <dbReference type="NCBI Taxonomy" id="314225"/>
    <lineage>
        <taxon>Bacteria</taxon>
        <taxon>Pseudomonadati</taxon>
        <taxon>Pseudomonadota</taxon>
        <taxon>Alphaproteobacteria</taxon>
        <taxon>Sphingomonadales</taxon>
        <taxon>Erythrobacteraceae</taxon>
        <taxon>Erythrobacter/Porphyrobacter group</taxon>
        <taxon>Erythrobacter</taxon>
    </lineage>
</organism>
<proteinExistence type="inferred from homology"/>
<feature type="chain" id="PRO_1000056039" description="Large ribosomal subunit protein uL30">
    <location>
        <begin position="1"/>
        <end position="58"/>
    </location>
</feature>
<accession>Q2N9C9</accession>
<comment type="subunit">
    <text evidence="1">Part of the 50S ribosomal subunit.</text>
</comment>
<comment type="similarity">
    <text evidence="1">Belongs to the universal ribosomal protein uL30 family.</text>
</comment>
<evidence type="ECO:0000255" key="1">
    <source>
        <dbReference type="HAMAP-Rule" id="MF_01371"/>
    </source>
</evidence>
<evidence type="ECO:0000305" key="2"/>